<protein>
    <recommendedName>
        <fullName>Probable quinone oxidoreductase</fullName>
        <ecNumber>1.6.5.5</ecNumber>
    </recommendedName>
    <alternativeName>
        <fullName>NADPH:quinone reductase</fullName>
    </alternativeName>
</protein>
<proteinExistence type="evidence at protein level"/>
<gene>
    <name type="primary">zta1</name>
    <name type="ORF">SPCC1442.16c</name>
    <name type="ORF">SPCC285.01c</name>
</gene>
<evidence type="ECO:0000269" key="1">
    <source>
    </source>
</evidence>
<evidence type="ECO:0000269" key="2">
    <source>
    </source>
</evidence>
<evidence type="ECO:0000305" key="3"/>
<feature type="chain" id="PRO_0000339115" description="Probable quinone oxidoreductase">
    <location>
        <begin position="1"/>
        <end position="329"/>
    </location>
</feature>
<feature type="modified residue" description="Phosphoserine" evidence="2">
    <location>
        <position position="191"/>
    </location>
</feature>
<keyword id="KW-0963">Cytoplasm</keyword>
<keyword id="KW-0521">NADP</keyword>
<keyword id="KW-0539">Nucleus</keyword>
<keyword id="KW-0560">Oxidoreductase</keyword>
<keyword id="KW-0597">Phosphoprotein</keyword>
<keyword id="KW-1185">Reference proteome</keyword>
<reference key="1">
    <citation type="journal article" date="2002" name="Nature">
        <title>The genome sequence of Schizosaccharomyces pombe.</title>
        <authorList>
            <person name="Wood V."/>
            <person name="Gwilliam R."/>
            <person name="Rajandream M.A."/>
            <person name="Lyne M.H."/>
            <person name="Lyne R."/>
            <person name="Stewart A."/>
            <person name="Sgouros J.G."/>
            <person name="Peat N."/>
            <person name="Hayles J."/>
            <person name="Baker S.G."/>
            <person name="Basham D."/>
            <person name="Bowman S."/>
            <person name="Brooks K."/>
            <person name="Brown D."/>
            <person name="Brown S."/>
            <person name="Chillingworth T."/>
            <person name="Churcher C.M."/>
            <person name="Collins M."/>
            <person name="Connor R."/>
            <person name="Cronin A."/>
            <person name="Davis P."/>
            <person name="Feltwell T."/>
            <person name="Fraser A."/>
            <person name="Gentles S."/>
            <person name="Goble A."/>
            <person name="Hamlin N."/>
            <person name="Harris D.E."/>
            <person name="Hidalgo J."/>
            <person name="Hodgson G."/>
            <person name="Holroyd S."/>
            <person name="Hornsby T."/>
            <person name="Howarth S."/>
            <person name="Huckle E.J."/>
            <person name="Hunt S."/>
            <person name="Jagels K."/>
            <person name="James K.D."/>
            <person name="Jones L."/>
            <person name="Jones M."/>
            <person name="Leather S."/>
            <person name="McDonald S."/>
            <person name="McLean J."/>
            <person name="Mooney P."/>
            <person name="Moule S."/>
            <person name="Mungall K.L."/>
            <person name="Murphy L.D."/>
            <person name="Niblett D."/>
            <person name="Odell C."/>
            <person name="Oliver K."/>
            <person name="O'Neil S."/>
            <person name="Pearson D."/>
            <person name="Quail M.A."/>
            <person name="Rabbinowitsch E."/>
            <person name="Rutherford K.M."/>
            <person name="Rutter S."/>
            <person name="Saunders D."/>
            <person name="Seeger K."/>
            <person name="Sharp S."/>
            <person name="Skelton J."/>
            <person name="Simmonds M.N."/>
            <person name="Squares R."/>
            <person name="Squares S."/>
            <person name="Stevens K."/>
            <person name="Taylor K."/>
            <person name="Taylor R.G."/>
            <person name="Tivey A."/>
            <person name="Walsh S.V."/>
            <person name="Warren T."/>
            <person name="Whitehead S."/>
            <person name="Woodward J.R."/>
            <person name="Volckaert G."/>
            <person name="Aert R."/>
            <person name="Robben J."/>
            <person name="Grymonprez B."/>
            <person name="Weltjens I."/>
            <person name="Vanstreels E."/>
            <person name="Rieger M."/>
            <person name="Schaefer M."/>
            <person name="Mueller-Auer S."/>
            <person name="Gabel C."/>
            <person name="Fuchs M."/>
            <person name="Duesterhoeft A."/>
            <person name="Fritzc C."/>
            <person name="Holzer E."/>
            <person name="Moestl D."/>
            <person name="Hilbert H."/>
            <person name="Borzym K."/>
            <person name="Langer I."/>
            <person name="Beck A."/>
            <person name="Lehrach H."/>
            <person name="Reinhardt R."/>
            <person name="Pohl T.M."/>
            <person name="Eger P."/>
            <person name="Zimmermann W."/>
            <person name="Wedler H."/>
            <person name="Wambutt R."/>
            <person name="Purnelle B."/>
            <person name="Goffeau A."/>
            <person name="Cadieu E."/>
            <person name="Dreano S."/>
            <person name="Gloux S."/>
            <person name="Lelaure V."/>
            <person name="Mottier S."/>
            <person name="Galibert F."/>
            <person name="Aves S.J."/>
            <person name="Xiang Z."/>
            <person name="Hunt C."/>
            <person name="Moore K."/>
            <person name="Hurst S.M."/>
            <person name="Lucas M."/>
            <person name="Rochet M."/>
            <person name="Gaillardin C."/>
            <person name="Tallada V.A."/>
            <person name="Garzon A."/>
            <person name="Thode G."/>
            <person name="Daga R.R."/>
            <person name="Cruzado L."/>
            <person name="Jimenez J."/>
            <person name="Sanchez M."/>
            <person name="del Rey F."/>
            <person name="Benito J."/>
            <person name="Dominguez A."/>
            <person name="Revuelta J.L."/>
            <person name="Moreno S."/>
            <person name="Armstrong J."/>
            <person name="Forsburg S.L."/>
            <person name="Cerutti L."/>
            <person name="Lowe T."/>
            <person name="McCombie W.R."/>
            <person name="Paulsen I."/>
            <person name="Potashkin J."/>
            <person name="Shpakovski G.V."/>
            <person name="Ussery D."/>
            <person name="Barrell B.G."/>
            <person name="Nurse P."/>
        </authorList>
    </citation>
    <scope>NUCLEOTIDE SEQUENCE [LARGE SCALE GENOMIC DNA]</scope>
    <source>
        <strain>972 / ATCC 24843</strain>
    </source>
</reference>
<reference key="2">
    <citation type="journal article" date="2006" name="Nat. Biotechnol.">
        <title>ORFeome cloning and global analysis of protein localization in the fission yeast Schizosaccharomyces pombe.</title>
        <authorList>
            <person name="Matsuyama A."/>
            <person name="Arai R."/>
            <person name="Yashiroda Y."/>
            <person name="Shirai A."/>
            <person name="Kamata A."/>
            <person name="Sekido S."/>
            <person name="Kobayashi Y."/>
            <person name="Hashimoto A."/>
            <person name="Hamamoto M."/>
            <person name="Hiraoka Y."/>
            <person name="Horinouchi S."/>
            <person name="Yoshida M."/>
        </authorList>
    </citation>
    <scope>SUBCELLULAR LOCATION [LARGE SCALE ANALYSIS]</scope>
</reference>
<reference key="3">
    <citation type="journal article" date="2008" name="J. Proteome Res.">
        <title>Phosphoproteome analysis of fission yeast.</title>
        <authorList>
            <person name="Wilson-Grady J.T."/>
            <person name="Villen J."/>
            <person name="Gygi S.P."/>
        </authorList>
    </citation>
    <scope>PHOSPHORYLATION [LARGE SCALE ANALYSIS] AT SER-191</scope>
    <scope>IDENTIFICATION BY MASS SPECTROMETRY</scope>
</reference>
<organism>
    <name type="scientific">Schizosaccharomyces pombe (strain 972 / ATCC 24843)</name>
    <name type="common">Fission yeast</name>
    <dbReference type="NCBI Taxonomy" id="284812"/>
    <lineage>
        <taxon>Eukaryota</taxon>
        <taxon>Fungi</taxon>
        <taxon>Dikarya</taxon>
        <taxon>Ascomycota</taxon>
        <taxon>Taphrinomycotina</taxon>
        <taxon>Schizosaccharomycetes</taxon>
        <taxon>Schizosaccharomycetales</taxon>
        <taxon>Schizosaccharomycetaceae</taxon>
        <taxon>Schizosaccharomyces</taxon>
    </lineage>
</organism>
<accession>O74489</accession>
<sequence length="329" mass="34947">MSNLLVQVSKTGPSSVLQVITKEIPKPAPNGLVIKNAYAGLNYIDTYLRTGLYTAPLPYIPGKEAAGVVAAVGDKVEADFKVGDRVVYLTPFGAYAQYTNVPTTLVSKVSEKIPLKIASAALLQGLTAYTLIEEAYPVKTGDTVVVHAAAGGVGLLLCQMLRARNVHVIATASTAAKRRIAIKNGAEIACSYEDLTKVVADYTNGKGVDAAYDSVGIDTLSSSLDALRNGGTMVSFGNASGAIDAIPLKFLSARCLKFVRPSLFGYITGHAVFEGYVSRLWKEILDNNLNIAIHHIFKLSEAKEAHDAIESRATTGKLLLLCNEDLADA</sequence>
<dbReference type="EC" id="1.6.5.5"/>
<dbReference type="EMBL" id="CU329672">
    <property type="protein sequence ID" value="CAA21450.1"/>
    <property type="molecule type" value="Genomic_DNA"/>
</dbReference>
<dbReference type="PIR" id="T40981">
    <property type="entry name" value="T40981"/>
</dbReference>
<dbReference type="PIR" id="T41247">
    <property type="entry name" value="T41247"/>
</dbReference>
<dbReference type="RefSeq" id="NP_588330.1">
    <property type="nucleotide sequence ID" value="NM_001023321.2"/>
</dbReference>
<dbReference type="SMR" id="O74489"/>
<dbReference type="BioGRID" id="275407">
    <property type="interactions" value="5"/>
</dbReference>
<dbReference type="FunCoup" id="O74489">
    <property type="interactions" value="463"/>
</dbReference>
<dbReference type="STRING" id="284812.O74489"/>
<dbReference type="iPTMnet" id="O74489"/>
<dbReference type="PaxDb" id="4896-SPCC1442.16c.1"/>
<dbReference type="EnsemblFungi" id="SPCC1442.16c.1">
    <property type="protein sequence ID" value="SPCC1442.16c.1:pep"/>
    <property type="gene ID" value="SPCC1442.16c"/>
</dbReference>
<dbReference type="GeneID" id="2538826"/>
<dbReference type="KEGG" id="spo:2538826"/>
<dbReference type="PomBase" id="SPCC1442.16c">
    <property type="gene designation" value="zta1"/>
</dbReference>
<dbReference type="VEuPathDB" id="FungiDB:SPCC1442.16c"/>
<dbReference type="eggNOG" id="KOG1197">
    <property type="taxonomic scope" value="Eukaryota"/>
</dbReference>
<dbReference type="HOGENOM" id="CLU_026673_3_1_1"/>
<dbReference type="InParanoid" id="O74489"/>
<dbReference type="OMA" id="VDMSYSR"/>
<dbReference type="PhylomeDB" id="O74489"/>
<dbReference type="PRO" id="PR:O74489"/>
<dbReference type="Proteomes" id="UP000002485">
    <property type="component" value="Chromosome III"/>
</dbReference>
<dbReference type="GO" id="GO:0005829">
    <property type="term" value="C:cytosol"/>
    <property type="evidence" value="ECO:0007005"/>
    <property type="project" value="PomBase"/>
</dbReference>
<dbReference type="GO" id="GO:0005634">
    <property type="term" value="C:nucleus"/>
    <property type="evidence" value="ECO:0007005"/>
    <property type="project" value="PomBase"/>
</dbReference>
<dbReference type="GO" id="GO:0035925">
    <property type="term" value="F:mRNA 3'-UTR AU-rich region binding"/>
    <property type="evidence" value="ECO:0000318"/>
    <property type="project" value="GO_Central"/>
</dbReference>
<dbReference type="GO" id="GO:0070402">
    <property type="term" value="F:NADPH binding"/>
    <property type="evidence" value="ECO:0000318"/>
    <property type="project" value="GO_Central"/>
</dbReference>
<dbReference type="GO" id="GO:0003960">
    <property type="term" value="F:NADPH:quinone reductase activity"/>
    <property type="evidence" value="ECO:0000318"/>
    <property type="project" value="GO_Central"/>
</dbReference>
<dbReference type="GO" id="GO:1990748">
    <property type="term" value="P:cellular detoxification"/>
    <property type="evidence" value="ECO:0000250"/>
    <property type="project" value="PomBase"/>
</dbReference>
<dbReference type="CDD" id="cd05286">
    <property type="entry name" value="QOR2"/>
    <property type="match status" value="1"/>
</dbReference>
<dbReference type="FunFam" id="3.40.50.720:FF:000053">
    <property type="entry name" value="Quinone oxidoreductase 1"/>
    <property type="match status" value="1"/>
</dbReference>
<dbReference type="Gene3D" id="3.90.180.10">
    <property type="entry name" value="Medium-chain alcohol dehydrogenases, catalytic domain"/>
    <property type="match status" value="1"/>
</dbReference>
<dbReference type="Gene3D" id="3.40.50.720">
    <property type="entry name" value="NAD(P)-binding Rossmann-like Domain"/>
    <property type="match status" value="1"/>
</dbReference>
<dbReference type="InterPro" id="IPR013149">
    <property type="entry name" value="ADH-like_C"/>
</dbReference>
<dbReference type="InterPro" id="IPR013154">
    <property type="entry name" value="ADH-like_N"/>
</dbReference>
<dbReference type="InterPro" id="IPR011032">
    <property type="entry name" value="GroES-like_sf"/>
</dbReference>
<dbReference type="InterPro" id="IPR036291">
    <property type="entry name" value="NAD(P)-bd_dom_sf"/>
</dbReference>
<dbReference type="InterPro" id="IPR020843">
    <property type="entry name" value="PKS_ER"/>
</dbReference>
<dbReference type="InterPro" id="IPR047618">
    <property type="entry name" value="QOR-like"/>
</dbReference>
<dbReference type="PANTHER" id="PTHR48106">
    <property type="entry name" value="QUINONE OXIDOREDUCTASE PIG3-RELATED"/>
    <property type="match status" value="1"/>
</dbReference>
<dbReference type="PANTHER" id="PTHR48106:SF13">
    <property type="entry name" value="QUINONE OXIDOREDUCTASE-RELATED"/>
    <property type="match status" value="1"/>
</dbReference>
<dbReference type="Pfam" id="PF08240">
    <property type="entry name" value="ADH_N"/>
    <property type="match status" value="1"/>
</dbReference>
<dbReference type="Pfam" id="PF00107">
    <property type="entry name" value="ADH_zinc_N"/>
    <property type="match status" value="1"/>
</dbReference>
<dbReference type="SMART" id="SM00829">
    <property type="entry name" value="PKS_ER"/>
    <property type="match status" value="1"/>
</dbReference>
<dbReference type="SUPFAM" id="SSF50129">
    <property type="entry name" value="GroES-like"/>
    <property type="match status" value="1"/>
</dbReference>
<dbReference type="SUPFAM" id="SSF51735">
    <property type="entry name" value="NAD(P)-binding Rossmann-fold domains"/>
    <property type="match status" value="1"/>
</dbReference>
<comment type="catalytic activity">
    <reaction>
        <text>2 a quinone + NADPH + H(+) = 2 a 1,4-benzosemiquinone + NADP(+)</text>
        <dbReference type="Rhea" id="RHEA:14269"/>
        <dbReference type="ChEBI" id="CHEBI:15378"/>
        <dbReference type="ChEBI" id="CHEBI:57783"/>
        <dbReference type="ChEBI" id="CHEBI:58349"/>
        <dbReference type="ChEBI" id="CHEBI:132124"/>
        <dbReference type="ChEBI" id="CHEBI:134225"/>
        <dbReference type="EC" id="1.6.5.5"/>
    </reaction>
</comment>
<comment type="subcellular location">
    <subcellularLocation>
        <location evidence="1">Cytoplasm</location>
    </subcellularLocation>
    <subcellularLocation>
        <location evidence="1">Nucleus</location>
    </subcellularLocation>
</comment>
<comment type="similarity">
    <text evidence="3">Belongs to the zinc-containing alcohol dehydrogenase family. Quinone oxidoreductase subfamily.</text>
</comment>
<name>QOR_SCHPO</name>